<protein>
    <recommendedName>
        <fullName evidence="1">Putative 3-methyladenine DNA glycosylase</fullName>
        <ecNumber evidence="1">3.2.2.-</ecNumber>
    </recommendedName>
</protein>
<accession>Q89LR7</accession>
<sequence length="200" mass="21740">MAPTSKTSPPRLGKPLKRAFFGRSVREVAHDLIGATMLVDGVGGLIVEVEAYHHTEPAAHSYNGPTPRNHVMFGPPGFAYVYRSYGIHWCVNFVCEAEGSAAAVLIRALEPTHGIAAMRRRRHLQDVHALCSGPGKLTEALGITIAHNALPLDRPPIALHARTEDLEVATGIRIGITKAVELPWRYGVKGSKFLSKPFPK</sequence>
<organism>
    <name type="scientific">Bradyrhizobium diazoefficiens (strain JCM 10833 / BCRC 13528 / IAM 13628 / NBRC 14792 / USDA 110)</name>
    <dbReference type="NCBI Taxonomy" id="224911"/>
    <lineage>
        <taxon>Bacteria</taxon>
        <taxon>Pseudomonadati</taxon>
        <taxon>Pseudomonadota</taxon>
        <taxon>Alphaproteobacteria</taxon>
        <taxon>Hyphomicrobiales</taxon>
        <taxon>Nitrobacteraceae</taxon>
        <taxon>Bradyrhizobium</taxon>
    </lineage>
</organism>
<keyword id="KW-0227">DNA damage</keyword>
<keyword id="KW-0234">DNA repair</keyword>
<keyword id="KW-0378">Hydrolase</keyword>
<keyword id="KW-1185">Reference proteome</keyword>
<proteinExistence type="inferred from homology"/>
<reference key="1">
    <citation type="journal article" date="2002" name="DNA Res.">
        <title>Complete genomic sequence of nitrogen-fixing symbiotic bacterium Bradyrhizobium japonicum USDA110.</title>
        <authorList>
            <person name="Kaneko T."/>
            <person name="Nakamura Y."/>
            <person name="Sato S."/>
            <person name="Minamisawa K."/>
            <person name="Uchiumi T."/>
            <person name="Sasamoto S."/>
            <person name="Watanabe A."/>
            <person name="Idesawa K."/>
            <person name="Iriguchi M."/>
            <person name="Kawashima K."/>
            <person name="Kohara M."/>
            <person name="Matsumoto M."/>
            <person name="Shimpo S."/>
            <person name="Tsuruoka H."/>
            <person name="Wada T."/>
            <person name="Yamada M."/>
            <person name="Tabata S."/>
        </authorList>
    </citation>
    <scope>NUCLEOTIDE SEQUENCE [LARGE SCALE GENOMIC DNA]</scope>
    <source>
        <strain>JCM 10833 / BCRC 13528 / IAM 13628 / NBRC 14792 / USDA 110</strain>
    </source>
</reference>
<dbReference type="EC" id="3.2.2.-" evidence="1"/>
<dbReference type="EMBL" id="BA000040">
    <property type="protein sequence ID" value="BAC49741.1"/>
    <property type="molecule type" value="Genomic_DNA"/>
</dbReference>
<dbReference type="RefSeq" id="NP_771116.1">
    <property type="nucleotide sequence ID" value="NC_004463.1"/>
</dbReference>
<dbReference type="RefSeq" id="WP_011087248.1">
    <property type="nucleotide sequence ID" value="NC_004463.1"/>
</dbReference>
<dbReference type="SMR" id="Q89LR7"/>
<dbReference type="STRING" id="224911.AAV28_19545"/>
<dbReference type="EnsemblBacteria" id="BAC49741">
    <property type="protein sequence ID" value="BAC49741"/>
    <property type="gene ID" value="BAC49741"/>
</dbReference>
<dbReference type="GeneID" id="46491482"/>
<dbReference type="KEGG" id="bja:bll4476"/>
<dbReference type="PATRIC" id="fig|224911.44.peg.4249"/>
<dbReference type="eggNOG" id="COG2094">
    <property type="taxonomic scope" value="Bacteria"/>
</dbReference>
<dbReference type="HOGENOM" id="CLU_060471_4_1_5"/>
<dbReference type="InParanoid" id="Q89LR7"/>
<dbReference type="OrthoDB" id="9794313at2"/>
<dbReference type="PhylomeDB" id="Q89LR7"/>
<dbReference type="Proteomes" id="UP000002526">
    <property type="component" value="Chromosome"/>
</dbReference>
<dbReference type="GO" id="GO:0003905">
    <property type="term" value="F:alkylbase DNA N-glycosylase activity"/>
    <property type="evidence" value="ECO:0000318"/>
    <property type="project" value="GO_Central"/>
</dbReference>
<dbReference type="GO" id="GO:0003677">
    <property type="term" value="F:DNA binding"/>
    <property type="evidence" value="ECO:0007669"/>
    <property type="project" value="InterPro"/>
</dbReference>
<dbReference type="GO" id="GO:0006284">
    <property type="term" value="P:base-excision repair"/>
    <property type="evidence" value="ECO:0000318"/>
    <property type="project" value="GO_Central"/>
</dbReference>
<dbReference type="CDD" id="cd00540">
    <property type="entry name" value="AAG"/>
    <property type="match status" value="1"/>
</dbReference>
<dbReference type="FunFam" id="3.10.300.10:FF:000001">
    <property type="entry name" value="Putative 3-methyladenine DNA glycosylase"/>
    <property type="match status" value="1"/>
</dbReference>
<dbReference type="Gene3D" id="3.10.300.10">
    <property type="entry name" value="Methylpurine-DNA glycosylase (MPG)"/>
    <property type="match status" value="1"/>
</dbReference>
<dbReference type="HAMAP" id="MF_00527">
    <property type="entry name" value="3MGH"/>
    <property type="match status" value="1"/>
</dbReference>
<dbReference type="InterPro" id="IPR011034">
    <property type="entry name" value="Formyl_transferase-like_C_sf"/>
</dbReference>
<dbReference type="InterPro" id="IPR003180">
    <property type="entry name" value="MPG"/>
</dbReference>
<dbReference type="InterPro" id="IPR036995">
    <property type="entry name" value="MPG_sf"/>
</dbReference>
<dbReference type="NCBIfam" id="TIGR00567">
    <property type="entry name" value="3mg"/>
    <property type="match status" value="1"/>
</dbReference>
<dbReference type="NCBIfam" id="NF002003">
    <property type="entry name" value="PRK00802.1-3"/>
    <property type="match status" value="1"/>
</dbReference>
<dbReference type="PANTHER" id="PTHR10429">
    <property type="entry name" value="DNA-3-METHYLADENINE GLYCOSYLASE"/>
    <property type="match status" value="1"/>
</dbReference>
<dbReference type="PANTHER" id="PTHR10429:SF0">
    <property type="entry name" value="DNA-3-METHYLADENINE GLYCOSYLASE"/>
    <property type="match status" value="1"/>
</dbReference>
<dbReference type="Pfam" id="PF02245">
    <property type="entry name" value="Pur_DNA_glyco"/>
    <property type="match status" value="1"/>
</dbReference>
<dbReference type="SUPFAM" id="SSF50486">
    <property type="entry name" value="FMT C-terminal domain-like"/>
    <property type="match status" value="1"/>
</dbReference>
<feature type="chain" id="PRO_0000100075" description="Putative 3-methyladenine DNA glycosylase">
    <location>
        <begin position="1"/>
        <end position="200"/>
    </location>
</feature>
<name>3MGH_BRADU</name>
<evidence type="ECO:0000255" key="1">
    <source>
        <dbReference type="HAMAP-Rule" id="MF_00527"/>
    </source>
</evidence>
<gene>
    <name type="ordered locus">bll4476</name>
</gene>
<comment type="similarity">
    <text evidence="1">Belongs to the DNA glycosylase MPG family.</text>
</comment>